<keyword id="KW-0067">ATP-binding</keyword>
<keyword id="KW-0963">Cytoplasm</keyword>
<keyword id="KW-0418">Kinase</keyword>
<keyword id="KW-0545">Nucleotide biosynthesis</keyword>
<keyword id="KW-0547">Nucleotide-binding</keyword>
<keyword id="KW-1185">Reference proteome</keyword>
<keyword id="KW-0808">Transferase</keyword>
<proteinExistence type="inferred from homology"/>
<reference key="1">
    <citation type="journal article" date="2011" name="Stand. Genomic Sci.">
        <title>Complete genome sequence of the halophilic and highly halotolerant Chromohalobacter salexigens type strain (1H11(T)).</title>
        <authorList>
            <person name="Copeland A."/>
            <person name="O'Connor K."/>
            <person name="Lucas S."/>
            <person name="Lapidus A."/>
            <person name="Berry K.W."/>
            <person name="Detter J.C."/>
            <person name="Del Rio T.G."/>
            <person name="Hammon N."/>
            <person name="Dalin E."/>
            <person name="Tice H."/>
            <person name="Pitluck S."/>
            <person name="Bruce D."/>
            <person name="Goodwin L."/>
            <person name="Han C."/>
            <person name="Tapia R."/>
            <person name="Saunders E."/>
            <person name="Schmutz J."/>
            <person name="Brettin T."/>
            <person name="Larimer F."/>
            <person name="Land M."/>
            <person name="Hauser L."/>
            <person name="Vargas C."/>
            <person name="Nieto J.J."/>
            <person name="Kyrpides N.C."/>
            <person name="Ivanova N."/>
            <person name="Goker M."/>
            <person name="Klenk H.P."/>
            <person name="Csonka L.N."/>
            <person name="Woyke T."/>
        </authorList>
    </citation>
    <scope>NUCLEOTIDE SEQUENCE [LARGE SCALE GENOMIC DNA]</scope>
    <source>
        <strain>ATCC BAA-138 / DSM 3043 / CIP 106854 / NCIMB 13768 / 1H11</strain>
    </source>
</reference>
<name>KAD_CHRSD</name>
<comment type="function">
    <text evidence="1">Catalyzes the reversible transfer of the terminal phosphate group between ATP and AMP. Plays an important role in cellular energy homeostasis and in adenine nucleotide metabolism.</text>
</comment>
<comment type="catalytic activity">
    <reaction evidence="1">
        <text>AMP + ATP = 2 ADP</text>
        <dbReference type="Rhea" id="RHEA:12973"/>
        <dbReference type="ChEBI" id="CHEBI:30616"/>
        <dbReference type="ChEBI" id="CHEBI:456215"/>
        <dbReference type="ChEBI" id="CHEBI:456216"/>
        <dbReference type="EC" id="2.7.4.3"/>
    </reaction>
</comment>
<comment type="pathway">
    <text evidence="1">Purine metabolism; AMP biosynthesis via salvage pathway; AMP from ADP: step 1/1.</text>
</comment>
<comment type="subunit">
    <text evidence="1">Monomer.</text>
</comment>
<comment type="subcellular location">
    <subcellularLocation>
        <location evidence="1">Cytoplasm</location>
    </subcellularLocation>
</comment>
<comment type="domain">
    <text evidence="1">Consists of three domains, a large central CORE domain and two small peripheral domains, NMPbind and LID, which undergo movements during catalysis. The LID domain closes over the site of phosphoryl transfer upon ATP binding. Assembling and dissambling the active center during each catalytic cycle provides an effective means to prevent ATP hydrolysis.</text>
</comment>
<comment type="similarity">
    <text evidence="1">Belongs to the adenylate kinase family.</text>
</comment>
<gene>
    <name evidence="1" type="primary">adk</name>
    <name type="ordered locus">Csal_0857</name>
</gene>
<dbReference type="EC" id="2.7.4.3" evidence="1"/>
<dbReference type="EMBL" id="CP000285">
    <property type="protein sequence ID" value="ABE58214.1"/>
    <property type="molecule type" value="Genomic_DNA"/>
</dbReference>
<dbReference type="RefSeq" id="WP_011506160.1">
    <property type="nucleotide sequence ID" value="NC_007963.1"/>
</dbReference>
<dbReference type="SMR" id="Q1QZ94"/>
<dbReference type="STRING" id="290398.Csal_0857"/>
<dbReference type="GeneID" id="95333606"/>
<dbReference type="KEGG" id="csa:Csal_0857"/>
<dbReference type="eggNOG" id="COG0563">
    <property type="taxonomic scope" value="Bacteria"/>
</dbReference>
<dbReference type="HOGENOM" id="CLU_032354_1_2_6"/>
<dbReference type="OrthoDB" id="9805030at2"/>
<dbReference type="UniPathway" id="UPA00588">
    <property type="reaction ID" value="UER00649"/>
</dbReference>
<dbReference type="Proteomes" id="UP000000239">
    <property type="component" value="Chromosome"/>
</dbReference>
<dbReference type="GO" id="GO:0005737">
    <property type="term" value="C:cytoplasm"/>
    <property type="evidence" value="ECO:0007669"/>
    <property type="project" value="UniProtKB-SubCell"/>
</dbReference>
<dbReference type="GO" id="GO:0004017">
    <property type="term" value="F:adenylate kinase activity"/>
    <property type="evidence" value="ECO:0007669"/>
    <property type="project" value="UniProtKB-UniRule"/>
</dbReference>
<dbReference type="GO" id="GO:0005524">
    <property type="term" value="F:ATP binding"/>
    <property type="evidence" value="ECO:0007669"/>
    <property type="project" value="UniProtKB-UniRule"/>
</dbReference>
<dbReference type="GO" id="GO:0044209">
    <property type="term" value="P:AMP salvage"/>
    <property type="evidence" value="ECO:0007669"/>
    <property type="project" value="UniProtKB-UniRule"/>
</dbReference>
<dbReference type="CDD" id="cd01428">
    <property type="entry name" value="ADK"/>
    <property type="match status" value="1"/>
</dbReference>
<dbReference type="FunFam" id="3.40.50.300:FF:000106">
    <property type="entry name" value="Adenylate kinase mitochondrial"/>
    <property type="match status" value="1"/>
</dbReference>
<dbReference type="Gene3D" id="3.40.50.300">
    <property type="entry name" value="P-loop containing nucleotide triphosphate hydrolases"/>
    <property type="match status" value="1"/>
</dbReference>
<dbReference type="HAMAP" id="MF_00235">
    <property type="entry name" value="Adenylate_kinase_Adk"/>
    <property type="match status" value="1"/>
</dbReference>
<dbReference type="InterPro" id="IPR006259">
    <property type="entry name" value="Adenyl_kin_sub"/>
</dbReference>
<dbReference type="InterPro" id="IPR000850">
    <property type="entry name" value="Adenylat/UMP-CMP_kin"/>
</dbReference>
<dbReference type="InterPro" id="IPR033690">
    <property type="entry name" value="Adenylat_kinase_CS"/>
</dbReference>
<dbReference type="InterPro" id="IPR007862">
    <property type="entry name" value="Adenylate_kinase_lid-dom"/>
</dbReference>
<dbReference type="InterPro" id="IPR027417">
    <property type="entry name" value="P-loop_NTPase"/>
</dbReference>
<dbReference type="NCBIfam" id="TIGR01351">
    <property type="entry name" value="adk"/>
    <property type="match status" value="1"/>
</dbReference>
<dbReference type="NCBIfam" id="NF001379">
    <property type="entry name" value="PRK00279.1-1"/>
    <property type="match status" value="1"/>
</dbReference>
<dbReference type="NCBIfam" id="NF001380">
    <property type="entry name" value="PRK00279.1-2"/>
    <property type="match status" value="1"/>
</dbReference>
<dbReference type="NCBIfam" id="NF001381">
    <property type="entry name" value="PRK00279.1-3"/>
    <property type="match status" value="1"/>
</dbReference>
<dbReference type="NCBIfam" id="NF011100">
    <property type="entry name" value="PRK14527.1"/>
    <property type="match status" value="1"/>
</dbReference>
<dbReference type="PANTHER" id="PTHR23359">
    <property type="entry name" value="NUCLEOTIDE KINASE"/>
    <property type="match status" value="1"/>
</dbReference>
<dbReference type="Pfam" id="PF00406">
    <property type="entry name" value="ADK"/>
    <property type="match status" value="1"/>
</dbReference>
<dbReference type="Pfam" id="PF05191">
    <property type="entry name" value="ADK_lid"/>
    <property type="match status" value="1"/>
</dbReference>
<dbReference type="PRINTS" id="PR00094">
    <property type="entry name" value="ADENYLTKNASE"/>
</dbReference>
<dbReference type="SUPFAM" id="SSF52540">
    <property type="entry name" value="P-loop containing nucleoside triphosphate hydrolases"/>
    <property type="match status" value="1"/>
</dbReference>
<dbReference type="PROSITE" id="PS00113">
    <property type="entry name" value="ADENYLATE_KINASE"/>
    <property type="match status" value="1"/>
</dbReference>
<feature type="chain" id="PRO_1000058815" description="Adenylate kinase">
    <location>
        <begin position="1"/>
        <end position="218"/>
    </location>
</feature>
<feature type="region of interest" description="NMP" evidence="1">
    <location>
        <begin position="30"/>
        <end position="59"/>
    </location>
</feature>
<feature type="region of interest" description="LID" evidence="1">
    <location>
        <begin position="122"/>
        <end position="159"/>
    </location>
</feature>
<feature type="binding site" evidence="1">
    <location>
        <begin position="10"/>
        <end position="15"/>
    </location>
    <ligand>
        <name>ATP</name>
        <dbReference type="ChEBI" id="CHEBI:30616"/>
    </ligand>
</feature>
<feature type="binding site" evidence="1">
    <location>
        <position position="31"/>
    </location>
    <ligand>
        <name>AMP</name>
        <dbReference type="ChEBI" id="CHEBI:456215"/>
    </ligand>
</feature>
<feature type="binding site" evidence="1">
    <location>
        <position position="36"/>
    </location>
    <ligand>
        <name>AMP</name>
        <dbReference type="ChEBI" id="CHEBI:456215"/>
    </ligand>
</feature>
<feature type="binding site" evidence="1">
    <location>
        <begin position="57"/>
        <end position="59"/>
    </location>
    <ligand>
        <name>AMP</name>
        <dbReference type="ChEBI" id="CHEBI:456215"/>
    </ligand>
</feature>
<feature type="binding site" evidence="1">
    <location>
        <begin position="85"/>
        <end position="88"/>
    </location>
    <ligand>
        <name>AMP</name>
        <dbReference type="ChEBI" id="CHEBI:456215"/>
    </ligand>
</feature>
<feature type="binding site" evidence="1">
    <location>
        <position position="92"/>
    </location>
    <ligand>
        <name>AMP</name>
        <dbReference type="ChEBI" id="CHEBI:456215"/>
    </ligand>
</feature>
<feature type="binding site" evidence="1">
    <location>
        <position position="123"/>
    </location>
    <ligand>
        <name>ATP</name>
        <dbReference type="ChEBI" id="CHEBI:30616"/>
    </ligand>
</feature>
<feature type="binding site" evidence="1">
    <location>
        <begin position="132"/>
        <end position="133"/>
    </location>
    <ligand>
        <name>ATP</name>
        <dbReference type="ChEBI" id="CHEBI:30616"/>
    </ligand>
</feature>
<feature type="binding site" evidence="1">
    <location>
        <position position="156"/>
    </location>
    <ligand>
        <name>AMP</name>
        <dbReference type="ChEBI" id="CHEBI:456215"/>
    </ligand>
</feature>
<feature type="binding site" evidence="1">
    <location>
        <position position="167"/>
    </location>
    <ligand>
        <name>AMP</name>
        <dbReference type="ChEBI" id="CHEBI:456215"/>
    </ligand>
</feature>
<feature type="binding site" evidence="1">
    <location>
        <position position="203"/>
    </location>
    <ligand>
        <name>ATP</name>
        <dbReference type="ChEBI" id="CHEBI:30616"/>
    </ligand>
</feature>
<accession>Q1QZ94</accession>
<organism>
    <name type="scientific">Chromohalobacter salexigens (strain ATCC BAA-138 / DSM 3043 / CIP 106854 / NCIMB 13768 / 1H11)</name>
    <dbReference type="NCBI Taxonomy" id="290398"/>
    <lineage>
        <taxon>Bacteria</taxon>
        <taxon>Pseudomonadati</taxon>
        <taxon>Pseudomonadota</taxon>
        <taxon>Gammaproteobacteria</taxon>
        <taxon>Oceanospirillales</taxon>
        <taxon>Halomonadaceae</taxon>
        <taxon>Chromohalobacter</taxon>
    </lineage>
</organism>
<protein>
    <recommendedName>
        <fullName evidence="1">Adenylate kinase</fullName>
        <shortName evidence="1">AK</shortName>
        <ecNumber evidence="1">2.7.4.3</ecNumber>
    </recommendedName>
    <alternativeName>
        <fullName evidence="1">ATP-AMP transphosphorylase</fullName>
    </alternativeName>
    <alternativeName>
        <fullName evidence="1">ATP:AMP phosphotransferase</fullName>
    </alternativeName>
    <alternativeName>
        <fullName evidence="1">Adenylate monophosphate kinase</fullName>
    </alternativeName>
</protein>
<sequence length="218" mass="24107">MRLILLGAPGAGKGTQAQFICERFDIPQISTGDMLRAAVKEGSELGLKVKEIMNSGGLVSDDIIIALVKERIAQPDCANGFLFDGFPRTIPQADAMKEANVKLDHVLEVAVDDEEIVTRLAGRRVHPGSGRVYHVDYNPPKEEGKDDVTGEALIQRDDDREATVRNRLSVYHEQTEPLVQYYREWAQQDPQTAPAYHRVEGTGSVEAIRQQVLTALEG</sequence>
<evidence type="ECO:0000255" key="1">
    <source>
        <dbReference type="HAMAP-Rule" id="MF_00235"/>
    </source>
</evidence>